<comment type="similarity">
    <text evidence="1">Belongs to the bacterial ribosomal protein bL28 family.</text>
</comment>
<reference key="1">
    <citation type="submission" date="2008-01" db="EMBL/GenBank/DDBJ databases">
        <title>Complete sequence of chromosome of Caulobacter sp. K31.</title>
        <authorList>
            <consortium name="US DOE Joint Genome Institute"/>
            <person name="Copeland A."/>
            <person name="Lucas S."/>
            <person name="Lapidus A."/>
            <person name="Barry K."/>
            <person name="Glavina del Rio T."/>
            <person name="Dalin E."/>
            <person name="Tice H."/>
            <person name="Pitluck S."/>
            <person name="Bruce D."/>
            <person name="Goodwin L."/>
            <person name="Thompson L.S."/>
            <person name="Brettin T."/>
            <person name="Detter J.C."/>
            <person name="Han C."/>
            <person name="Schmutz J."/>
            <person name="Larimer F."/>
            <person name="Land M."/>
            <person name="Hauser L."/>
            <person name="Kyrpides N."/>
            <person name="Kim E."/>
            <person name="Stephens C."/>
            <person name="Richardson P."/>
        </authorList>
    </citation>
    <scope>NUCLEOTIDE SEQUENCE [LARGE SCALE GENOMIC DNA]</scope>
    <source>
        <strain>K31</strain>
    </source>
</reference>
<organism>
    <name type="scientific">Caulobacter sp. (strain K31)</name>
    <dbReference type="NCBI Taxonomy" id="366602"/>
    <lineage>
        <taxon>Bacteria</taxon>
        <taxon>Pseudomonadati</taxon>
        <taxon>Pseudomonadota</taxon>
        <taxon>Alphaproteobacteria</taxon>
        <taxon>Caulobacterales</taxon>
        <taxon>Caulobacteraceae</taxon>
        <taxon>Caulobacter</taxon>
    </lineage>
</organism>
<proteinExistence type="inferred from homology"/>
<protein>
    <recommendedName>
        <fullName evidence="1">Large ribosomal subunit protein bL28</fullName>
    </recommendedName>
    <alternativeName>
        <fullName evidence="2">50S ribosomal protein L28</fullName>
    </alternativeName>
</protein>
<name>RL28_CAUSK</name>
<gene>
    <name evidence="1" type="primary">rpmB</name>
    <name type="ordered locus">Caul_4128</name>
</gene>
<dbReference type="EMBL" id="CP000927">
    <property type="protein sequence ID" value="ABZ73252.1"/>
    <property type="molecule type" value="Genomic_DNA"/>
</dbReference>
<dbReference type="SMR" id="B0SXP0"/>
<dbReference type="STRING" id="366602.Caul_4128"/>
<dbReference type="KEGG" id="cak:Caul_4128"/>
<dbReference type="eggNOG" id="COG0227">
    <property type="taxonomic scope" value="Bacteria"/>
</dbReference>
<dbReference type="HOGENOM" id="CLU_064548_4_2_5"/>
<dbReference type="OrthoDB" id="9805609at2"/>
<dbReference type="GO" id="GO:0022625">
    <property type="term" value="C:cytosolic large ribosomal subunit"/>
    <property type="evidence" value="ECO:0007669"/>
    <property type="project" value="TreeGrafter"/>
</dbReference>
<dbReference type="GO" id="GO:0003735">
    <property type="term" value="F:structural constituent of ribosome"/>
    <property type="evidence" value="ECO:0007669"/>
    <property type="project" value="InterPro"/>
</dbReference>
<dbReference type="GO" id="GO:0006412">
    <property type="term" value="P:translation"/>
    <property type="evidence" value="ECO:0007669"/>
    <property type="project" value="UniProtKB-UniRule"/>
</dbReference>
<dbReference type="Gene3D" id="2.30.170.40">
    <property type="entry name" value="Ribosomal protein L28/L24"/>
    <property type="match status" value="1"/>
</dbReference>
<dbReference type="HAMAP" id="MF_00373">
    <property type="entry name" value="Ribosomal_bL28"/>
    <property type="match status" value="1"/>
</dbReference>
<dbReference type="InterPro" id="IPR026569">
    <property type="entry name" value="Ribosomal_bL28"/>
</dbReference>
<dbReference type="InterPro" id="IPR034704">
    <property type="entry name" value="Ribosomal_bL28/bL31-like_sf"/>
</dbReference>
<dbReference type="InterPro" id="IPR001383">
    <property type="entry name" value="Ribosomal_bL28_bact-type"/>
</dbReference>
<dbReference type="InterPro" id="IPR037147">
    <property type="entry name" value="Ribosomal_bL28_sf"/>
</dbReference>
<dbReference type="NCBIfam" id="TIGR00009">
    <property type="entry name" value="L28"/>
    <property type="match status" value="1"/>
</dbReference>
<dbReference type="PANTHER" id="PTHR13528">
    <property type="entry name" value="39S RIBOSOMAL PROTEIN L28, MITOCHONDRIAL"/>
    <property type="match status" value="1"/>
</dbReference>
<dbReference type="PANTHER" id="PTHR13528:SF2">
    <property type="entry name" value="LARGE RIBOSOMAL SUBUNIT PROTEIN BL28M"/>
    <property type="match status" value="1"/>
</dbReference>
<dbReference type="Pfam" id="PF00830">
    <property type="entry name" value="Ribosomal_L28"/>
    <property type="match status" value="1"/>
</dbReference>
<dbReference type="SUPFAM" id="SSF143800">
    <property type="entry name" value="L28p-like"/>
    <property type="match status" value="1"/>
</dbReference>
<evidence type="ECO:0000255" key="1">
    <source>
        <dbReference type="HAMAP-Rule" id="MF_00373"/>
    </source>
</evidence>
<evidence type="ECO:0000305" key="2"/>
<feature type="chain" id="PRO_1000079841" description="Large ribosomal subunit protein bL28">
    <location>
        <begin position="1"/>
        <end position="101"/>
    </location>
</feature>
<keyword id="KW-0687">Ribonucleoprotein</keyword>
<keyword id="KW-0689">Ribosomal protein</keyword>
<accession>B0SXP0</accession>
<sequence>MSRRCELTGIGPMVGHNVSHSNIKTKRRFLPALSPASLQSDSLGQTFKLRISNAALRTLDFRGGLDVFLLGAKDEQLSPRALKIKAQVKAKAKAAATAVAA</sequence>